<keyword id="KW-0028">Amino-acid biosynthesis</keyword>
<keyword id="KW-0055">Arginine biosynthesis</keyword>
<keyword id="KW-0963">Cytoplasm</keyword>
<keyword id="KW-0233">DNA recombination</keyword>
<keyword id="KW-0238">DNA-binding</keyword>
<keyword id="KW-1185">Reference proteome</keyword>
<keyword id="KW-0678">Repressor</keyword>
<keyword id="KW-0804">Transcription</keyword>
<keyword id="KW-0805">Transcription regulation</keyword>
<evidence type="ECO:0000250" key="1"/>
<evidence type="ECO:0000305" key="2"/>
<gene>
    <name type="primary">argR</name>
    <name type="ordered locus">SF3277</name>
    <name type="ordered locus">S3492</name>
</gene>
<name>ARGR_SHIFL</name>
<proteinExistence type="inferred from homology"/>
<organism>
    <name type="scientific">Shigella flexneri</name>
    <dbReference type="NCBI Taxonomy" id="623"/>
    <lineage>
        <taxon>Bacteria</taxon>
        <taxon>Pseudomonadati</taxon>
        <taxon>Pseudomonadota</taxon>
        <taxon>Gammaproteobacteria</taxon>
        <taxon>Enterobacterales</taxon>
        <taxon>Enterobacteriaceae</taxon>
        <taxon>Shigella</taxon>
    </lineage>
</organism>
<accession>P0A6D2</accession>
<accession>P15282</accession>
<dbReference type="EMBL" id="AE005674">
    <property type="protein sequence ID" value="AAN44741.1"/>
    <property type="molecule type" value="Genomic_DNA"/>
</dbReference>
<dbReference type="EMBL" id="AE014073">
    <property type="protein sequence ID" value="AAP18551.1"/>
    <property type="molecule type" value="Genomic_DNA"/>
</dbReference>
<dbReference type="RefSeq" id="NP_709034.1">
    <property type="nucleotide sequence ID" value="NC_004337.2"/>
</dbReference>
<dbReference type="RefSeq" id="WP_001257846.1">
    <property type="nucleotide sequence ID" value="NZ_WPGW01000026.1"/>
</dbReference>
<dbReference type="SMR" id="P0A6D2"/>
<dbReference type="STRING" id="198214.SF3277"/>
<dbReference type="PaxDb" id="198214-SF3277"/>
<dbReference type="GeneID" id="1027085"/>
<dbReference type="GeneID" id="93778748"/>
<dbReference type="KEGG" id="sfl:SF3277"/>
<dbReference type="KEGG" id="sfx:S3492"/>
<dbReference type="PATRIC" id="fig|198214.7.peg.3883"/>
<dbReference type="HOGENOM" id="CLU_097103_2_0_6"/>
<dbReference type="UniPathway" id="UPA00068"/>
<dbReference type="Proteomes" id="UP000001006">
    <property type="component" value="Chromosome"/>
</dbReference>
<dbReference type="Proteomes" id="UP000002673">
    <property type="component" value="Chromosome"/>
</dbReference>
<dbReference type="GO" id="GO:0005737">
    <property type="term" value="C:cytoplasm"/>
    <property type="evidence" value="ECO:0007669"/>
    <property type="project" value="UniProtKB-SubCell"/>
</dbReference>
<dbReference type="GO" id="GO:0034618">
    <property type="term" value="F:arginine binding"/>
    <property type="evidence" value="ECO:0007669"/>
    <property type="project" value="InterPro"/>
</dbReference>
<dbReference type="GO" id="GO:0003677">
    <property type="term" value="F:DNA binding"/>
    <property type="evidence" value="ECO:0007669"/>
    <property type="project" value="UniProtKB-KW"/>
</dbReference>
<dbReference type="GO" id="GO:0003700">
    <property type="term" value="F:DNA-binding transcription factor activity"/>
    <property type="evidence" value="ECO:0007669"/>
    <property type="project" value="UniProtKB-UniRule"/>
</dbReference>
<dbReference type="GO" id="GO:0006310">
    <property type="term" value="P:DNA recombination"/>
    <property type="evidence" value="ECO:0007669"/>
    <property type="project" value="UniProtKB-KW"/>
</dbReference>
<dbReference type="GO" id="GO:0006526">
    <property type="term" value="P:L-arginine biosynthetic process"/>
    <property type="evidence" value="ECO:0007669"/>
    <property type="project" value="UniProtKB-UniPathway"/>
</dbReference>
<dbReference type="GO" id="GO:0051259">
    <property type="term" value="P:protein complex oligomerization"/>
    <property type="evidence" value="ECO:0007669"/>
    <property type="project" value="InterPro"/>
</dbReference>
<dbReference type="GO" id="GO:1900079">
    <property type="term" value="P:regulation of arginine biosynthetic process"/>
    <property type="evidence" value="ECO:0007669"/>
    <property type="project" value="UniProtKB-UniRule"/>
</dbReference>
<dbReference type="FunFam" id="1.10.10.10:FF:000074">
    <property type="entry name" value="Arginine repressor"/>
    <property type="match status" value="1"/>
</dbReference>
<dbReference type="FunFam" id="3.30.1360.40:FF:000004">
    <property type="entry name" value="Arginine repressor"/>
    <property type="match status" value="1"/>
</dbReference>
<dbReference type="Gene3D" id="3.30.1360.40">
    <property type="match status" value="1"/>
</dbReference>
<dbReference type="Gene3D" id="1.10.10.10">
    <property type="entry name" value="Winged helix-like DNA-binding domain superfamily/Winged helix DNA-binding domain"/>
    <property type="match status" value="1"/>
</dbReference>
<dbReference type="HAMAP" id="MF_00173">
    <property type="entry name" value="Arg_repressor"/>
    <property type="match status" value="1"/>
</dbReference>
<dbReference type="InterPro" id="IPR001669">
    <property type="entry name" value="Arg_repress"/>
</dbReference>
<dbReference type="InterPro" id="IPR020899">
    <property type="entry name" value="Arg_repress_C"/>
</dbReference>
<dbReference type="InterPro" id="IPR036251">
    <property type="entry name" value="Arg_repress_C_sf"/>
</dbReference>
<dbReference type="InterPro" id="IPR020900">
    <property type="entry name" value="Arg_repress_DNA-bd"/>
</dbReference>
<dbReference type="InterPro" id="IPR036388">
    <property type="entry name" value="WH-like_DNA-bd_sf"/>
</dbReference>
<dbReference type="InterPro" id="IPR036390">
    <property type="entry name" value="WH_DNA-bd_sf"/>
</dbReference>
<dbReference type="NCBIfam" id="TIGR01529">
    <property type="entry name" value="argR_whole"/>
    <property type="match status" value="1"/>
</dbReference>
<dbReference type="NCBIfam" id="NF003457">
    <property type="entry name" value="PRK05066.1"/>
    <property type="match status" value="1"/>
</dbReference>
<dbReference type="PANTHER" id="PTHR34471">
    <property type="entry name" value="ARGININE REPRESSOR"/>
    <property type="match status" value="1"/>
</dbReference>
<dbReference type="PANTHER" id="PTHR34471:SF1">
    <property type="entry name" value="ARGININE REPRESSOR"/>
    <property type="match status" value="1"/>
</dbReference>
<dbReference type="Pfam" id="PF01316">
    <property type="entry name" value="Arg_repressor"/>
    <property type="match status" value="1"/>
</dbReference>
<dbReference type="Pfam" id="PF02863">
    <property type="entry name" value="Arg_repressor_C"/>
    <property type="match status" value="1"/>
</dbReference>
<dbReference type="PRINTS" id="PR01467">
    <property type="entry name" value="ARGREPRESSOR"/>
</dbReference>
<dbReference type="SUPFAM" id="SSF55252">
    <property type="entry name" value="C-terminal domain of arginine repressor"/>
    <property type="match status" value="1"/>
</dbReference>
<dbReference type="SUPFAM" id="SSF46785">
    <property type="entry name" value="Winged helix' DNA-binding domain"/>
    <property type="match status" value="1"/>
</dbReference>
<comment type="function">
    <text evidence="1">Regulates arginine biosynthesis genes.</text>
</comment>
<comment type="pathway">
    <text>Amino-acid biosynthesis; L-arginine biosynthesis [regulation].</text>
</comment>
<comment type="subunit">
    <text evidence="1">Homohexamer.</text>
</comment>
<comment type="subcellular location">
    <subcellularLocation>
        <location evidence="1">Cytoplasm</location>
    </subcellularLocation>
</comment>
<comment type="similarity">
    <text evidence="2">Belongs to the ArgR family.</text>
</comment>
<protein>
    <recommendedName>
        <fullName>Arginine repressor</fullName>
    </recommendedName>
</protein>
<sequence length="156" mass="16995">MRSSAKQEELVKAFKALLKEEKFSSQGEIVAALQEQGFDNINQSKVSRMLTKFGAVRTRNAKMEMVYCLPAELGVPTTSSPLKNLVLDIDYNDAVVVIHTSPGAAQLIARLLDSLGKAEGILGTIAGDDTIFTTPANGFTVKDLYEAILELFDQEL</sequence>
<feature type="chain" id="PRO_0000205113" description="Arginine repressor">
    <location>
        <begin position="1"/>
        <end position="156"/>
    </location>
</feature>
<reference key="1">
    <citation type="journal article" date="2002" name="Nucleic Acids Res.">
        <title>Genome sequence of Shigella flexneri 2a: insights into pathogenicity through comparison with genomes of Escherichia coli K12 and O157.</title>
        <authorList>
            <person name="Jin Q."/>
            <person name="Yuan Z."/>
            <person name="Xu J."/>
            <person name="Wang Y."/>
            <person name="Shen Y."/>
            <person name="Lu W."/>
            <person name="Wang J."/>
            <person name="Liu H."/>
            <person name="Yang J."/>
            <person name="Yang F."/>
            <person name="Zhang X."/>
            <person name="Zhang J."/>
            <person name="Yang G."/>
            <person name="Wu H."/>
            <person name="Qu D."/>
            <person name="Dong J."/>
            <person name="Sun L."/>
            <person name="Xue Y."/>
            <person name="Zhao A."/>
            <person name="Gao Y."/>
            <person name="Zhu J."/>
            <person name="Kan B."/>
            <person name="Ding K."/>
            <person name="Chen S."/>
            <person name="Cheng H."/>
            <person name="Yao Z."/>
            <person name="He B."/>
            <person name="Chen R."/>
            <person name="Ma D."/>
            <person name="Qiang B."/>
            <person name="Wen Y."/>
            <person name="Hou Y."/>
            <person name="Yu J."/>
        </authorList>
    </citation>
    <scope>NUCLEOTIDE SEQUENCE [LARGE SCALE GENOMIC DNA]</scope>
    <source>
        <strain>301 / Serotype 2a</strain>
    </source>
</reference>
<reference key="2">
    <citation type="journal article" date="2003" name="Infect. Immun.">
        <title>Complete genome sequence and comparative genomics of Shigella flexneri serotype 2a strain 2457T.</title>
        <authorList>
            <person name="Wei J."/>
            <person name="Goldberg M.B."/>
            <person name="Burland V."/>
            <person name="Venkatesan M.M."/>
            <person name="Deng W."/>
            <person name="Fournier G."/>
            <person name="Mayhew G.F."/>
            <person name="Plunkett G. III"/>
            <person name="Rose D.J."/>
            <person name="Darling A."/>
            <person name="Mau B."/>
            <person name="Perna N.T."/>
            <person name="Payne S.M."/>
            <person name="Runyen-Janecky L.J."/>
            <person name="Zhou S."/>
            <person name="Schwartz D.C."/>
            <person name="Blattner F.R."/>
        </authorList>
    </citation>
    <scope>NUCLEOTIDE SEQUENCE [LARGE SCALE GENOMIC DNA]</scope>
    <source>
        <strain>ATCC 700930 / 2457T / Serotype 2a</strain>
    </source>
</reference>